<name>INT14_XENTR</name>
<accession>Q66KD9</accession>
<protein>
    <recommendedName>
        <fullName evidence="1">Integrator complex subunit 14</fullName>
    </recommendedName>
    <alternativeName>
        <fullName evidence="3">von Willebrand factor A domain-containing protein 9</fullName>
    </alternativeName>
</protein>
<feature type="chain" id="PRO_0000296271" description="Integrator complex subunit 14">
    <location>
        <begin position="1"/>
        <end position="518"/>
    </location>
</feature>
<feature type="domain" description="VWFA">
    <location>
        <begin position="2"/>
        <end position="204"/>
    </location>
</feature>
<feature type="binding site" evidence="1">
    <location>
        <position position="10"/>
    </location>
    <ligand>
        <name>Mg(2+)</name>
        <dbReference type="ChEBI" id="CHEBI:18420"/>
    </ligand>
</feature>
<feature type="binding site" evidence="1">
    <location>
        <position position="12"/>
    </location>
    <ligand>
        <name>Mg(2+)</name>
        <dbReference type="ChEBI" id="CHEBI:18420"/>
    </ligand>
</feature>
<feature type="binding site" evidence="1">
    <location>
        <position position="86"/>
    </location>
    <ligand>
        <name>Mg(2+)</name>
        <dbReference type="ChEBI" id="CHEBI:18420"/>
    </ligand>
</feature>
<proteinExistence type="evidence at transcript level"/>
<dbReference type="EMBL" id="BC080444">
    <property type="protein sequence ID" value="AAH80444.1"/>
    <property type="molecule type" value="mRNA"/>
</dbReference>
<dbReference type="RefSeq" id="NP_001007939.1">
    <property type="nucleotide sequence ID" value="NM_001007938.1"/>
</dbReference>
<dbReference type="RefSeq" id="XP_012814335.1">
    <property type="nucleotide sequence ID" value="XM_012958881.3"/>
</dbReference>
<dbReference type="SMR" id="Q66KD9"/>
<dbReference type="FunCoup" id="Q66KD9">
    <property type="interactions" value="4441"/>
</dbReference>
<dbReference type="STRING" id="8364.ENSXETP00000025028"/>
<dbReference type="PaxDb" id="8364-ENSXETP00000063118"/>
<dbReference type="DNASU" id="493315"/>
<dbReference type="GeneID" id="493315"/>
<dbReference type="KEGG" id="xtr:493315"/>
<dbReference type="AGR" id="Xenbase:XB-GENE-978854"/>
<dbReference type="CTD" id="81556"/>
<dbReference type="Xenbase" id="XB-GENE-978854">
    <property type="gene designation" value="ints14"/>
</dbReference>
<dbReference type="eggNOG" id="ENOG502QQ37">
    <property type="taxonomic scope" value="Eukaryota"/>
</dbReference>
<dbReference type="InParanoid" id="Q66KD9"/>
<dbReference type="OMA" id="QSSVVWI"/>
<dbReference type="OrthoDB" id="2374335at2759"/>
<dbReference type="Reactome" id="R-XTR-6807505">
    <property type="pathway name" value="RNA polymerase II transcribes snRNA genes"/>
</dbReference>
<dbReference type="Proteomes" id="UP000008143">
    <property type="component" value="Chromosome 3"/>
</dbReference>
<dbReference type="GO" id="GO:0160232">
    <property type="term" value="C:INTAC complex"/>
    <property type="evidence" value="ECO:0000250"/>
    <property type="project" value="UniProtKB"/>
</dbReference>
<dbReference type="GO" id="GO:0032039">
    <property type="term" value="C:integrator complex"/>
    <property type="evidence" value="ECO:0007669"/>
    <property type="project" value="InterPro"/>
</dbReference>
<dbReference type="GO" id="GO:0160240">
    <property type="term" value="P:RNA polymerase II transcription initiation surveillance"/>
    <property type="evidence" value="ECO:0000250"/>
    <property type="project" value="UniProtKB"/>
</dbReference>
<dbReference type="CDD" id="cd00198">
    <property type="entry name" value="vWFA"/>
    <property type="match status" value="1"/>
</dbReference>
<dbReference type="FunFam" id="3.40.50.410:FF:000137">
    <property type="entry name" value="Integrator complex subunit 14"/>
    <property type="match status" value="1"/>
</dbReference>
<dbReference type="Gene3D" id="3.40.50.410">
    <property type="entry name" value="von Willebrand factor, type A domain"/>
    <property type="match status" value="1"/>
</dbReference>
<dbReference type="InterPro" id="IPR039841">
    <property type="entry name" value="INTS14"/>
</dbReference>
<dbReference type="InterPro" id="IPR045814">
    <property type="entry name" value="IntS14_b-barrel"/>
</dbReference>
<dbReference type="InterPro" id="IPR046471">
    <property type="entry name" value="IntS14_C"/>
</dbReference>
<dbReference type="InterPro" id="IPR002035">
    <property type="entry name" value="VWF_A"/>
</dbReference>
<dbReference type="InterPro" id="IPR036465">
    <property type="entry name" value="vWFA_dom_sf"/>
</dbReference>
<dbReference type="PANTHER" id="PTHR13532">
    <property type="match status" value="1"/>
</dbReference>
<dbReference type="PANTHER" id="PTHR13532:SF3">
    <property type="entry name" value="INTEGRATOR COMPLEX SUBUNIT 14"/>
    <property type="match status" value="1"/>
</dbReference>
<dbReference type="Pfam" id="PF19435">
    <property type="entry name" value="IntS14_b-barrel"/>
    <property type="match status" value="1"/>
</dbReference>
<dbReference type="Pfam" id="PF20504">
    <property type="entry name" value="IntS14_C"/>
    <property type="match status" value="1"/>
</dbReference>
<dbReference type="Pfam" id="PF13519">
    <property type="entry name" value="VWA_2"/>
    <property type="match status" value="1"/>
</dbReference>
<dbReference type="SUPFAM" id="SSF53300">
    <property type="entry name" value="vWA-like"/>
    <property type="match status" value="1"/>
</dbReference>
<organism>
    <name type="scientific">Xenopus tropicalis</name>
    <name type="common">Western clawed frog</name>
    <name type="synonym">Silurana tropicalis</name>
    <dbReference type="NCBI Taxonomy" id="8364"/>
    <lineage>
        <taxon>Eukaryota</taxon>
        <taxon>Metazoa</taxon>
        <taxon>Chordata</taxon>
        <taxon>Craniata</taxon>
        <taxon>Vertebrata</taxon>
        <taxon>Euteleostomi</taxon>
        <taxon>Amphibia</taxon>
        <taxon>Batrachia</taxon>
        <taxon>Anura</taxon>
        <taxon>Pipoidea</taxon>
        <taxon>Pipidae</taxon>
        <taxon>Xenopodinae</taxon>
        <taxon>Xenopus</taxon>
        <taxon>Silurana</taxon>
    </lineage>
</organism>
<reference key="1">
    <citation type="submission" date="2004-08" db="EMBL/GenBank/DDBJ databases">
        <authorList>
            <consortium name="NIH - Xenopus Gene Collection (XGC) project"/>
        </authorList>
    </citation>
    <scope>NUCLEOTIDE SEQUENCE [LARGE SCALE MRNA]</scope>
    <source>
        <tissue>Embryo</tissue>
    </source>
</reference>
<sequence>MPTVVVMDVSLSMTRPVPVEGTEEFQRKHLAVHGLTMLFEHMATNYKLEFTAMVVFSSLWELMVPFTRDYNTLQEALSNIDDYDKTCLESALQGVSSVVQQEWGASIPSQIVLVTDGCLGIGKGSLQHSLATLNQRNDSNRFPLPFSFPSKLYIMCMANLEELQGSDSLEYLERLIDLNNGEGQIFTIDGPLCLKNVQSMFGKLIDVAYTPFHAVLKCGNLSSDVQVFPRPEPVITDEEIDPLPKTINTDLEVVGFIDIADISSPPVLSRHLVLPIALNKEGDEVGTGLADDMEDENSANQIAGKIPNFCVLLHGSLKVEGMVALVQLGPDWHGMLYSQADSKKKSNLMMSLFEPGLEPLPWLGKTMQLGPITDAKENPYGEEDNKSPFPLQPKNKRSYAQNVTVWIKPSGLQTDVQKILRNARKLPEKTQTFYKELNRLRKAALAFGFLDLLKGVSDMLERECTLLPDTAHPDAAFQLSHAAAQLKLASTGGSEHGAYDHNIVPLQTDFSGRNSDRI</sequence>
<comment type="function">
    <text evidence="1">Component of the integrator complex, a multiprotein complex that terminates RNA polymerase II (Pol II) transcription in the promoter-proximal region of genes. The integrator complex provides a quality checkpoint during transcription elongation by driving premature transcription termination of transcripts that are unfavorably configured for transcriptional elongation: the complex terminates transcription by (1) catalyzing dephosphorylation of the C-terminal domain (CTD) of Pol II subunit POLR2A/RPB1 and SUPT5H/SPT5, (2) degrading the exiting nascent RNA transcript via endonuclease activity and (3) promoting the release of Pol II from bound DNA. The integrator complex is also involved in terminating the synthesis of non-coding Pol II transcripts, such as enhancer RNAs (eRNAs), small nuclear RNAs (snRNAs), telomerase RNAs and long non-coding RNAs (lncRNAs). Within the integrator complex, INTS14 is part of the integrator tail module that acts as a platform for the recruitment of transcription factors at promoters.</text>
</comment>
<comment type="subunit">
    <text evidence="1">Component of the Integrator complex, composed of core subunits INTS1, INTS2, INTS3, INTS4, INTS5, INTS6, INTS7, INTS8, INTS9/RC74, INTS10, INTS11/CPSF3L, INTS12, INTS13, INTS14 and INTS15. The core complex associates with protein phosphatase 2A subunits PPP2CA and PPP2R1A, to form the Integrator-PP2A (INTAC) complex. INTS14 is part of the tail subcomplex, composed of INTS10, INTS13, INTS14 and INTS15.</text>
</comment>
<comment type="subcellular location">
    <subcellularLocation>
        <location evidence="2">Nucleus</location>
    </subcellularLocation>
</comment>
<comment type="similarity">
    <text evidence="3">Belongs to the Integrator subunit 14 family.</text>
</comment>
<keyword id="KW-0460">Magnesium</keyword>
<keyword id="KW-0479">Metal-binding</keyword>
<keyword id="KW-0539">Nucleus</keyword>
<keyword id="KW-1185">Reference proteome</keyword>
<gene>
    <name evidence="1" type="primary">ints14</name>
    <name evidence="3" type="synonym">vwa9</name>
</gene>
<evidence type="ECO:0000250" key="1">
    <source>
        <dbReference type="UniProtKB" id="Q96SY0"/>
    </source>
</evidence>
<evidence type="ECO:0000250" key="2">
    <source>
        <dbReference type="UniProtKB" id="Q9VPY0"/>
    </source>
</evidence>
<evidence type="ECO:0000305" key="3"/>